<feature type="chain" id="PRO_0000133229" description="Regulatory protein E2">
    <location>
        <begin position="1"/>
        <end position="358"/>
    </location>
</feature>
<feature type="region of interest" description="Transactivation domain" evidence="1">
    <location>
        <begin position="1"/>
        <end position="199"/>
    </location>
</feature>
<feature type="region of interest" description="Disordered" evidence="2">
    <location>
        <begin position="224"/>
        <end position="255"/>
    </location>
</feature>
<feature type="region of interest" description="DNA-binding domain" evidence="1">
    <location>
        <begin position="281"/>
        <end position="358"/>
    </location>
</feature>
<feature type="compositionally biased region" description="Polar residues" evidence="2">
    <location>
        <begin position="246"/>
        <end position="255"/>
    </location>
</feature>
<feature type="cross-link" description="Glycyl lysine isopeptide (Lys-Gly) (interchain with G-Cter in SUMO)" evidence="1">
    <location>
        <position position="288"/>
    </location>
</feature>
<evidence type="ECO:0000255" key="1">
    <source>
        <dbReference type="HAMAP-Rule" id="MF_04001"/>
    </source>
</evidence>
<evidence type="ECO:0000256" key="2">
    <source>
        <dbReference type="SAM" id="MobiDB-lite"/>
    </source>
</evidence>
<accession>P26547</accession>
<comment type="function">
    <text evidence="1">Plays a role in the initiation of viral DNA replication. A dimer of E2 interacts with a dimer of E1 in order to improve specificity of E1 DNA binding activity. Once the complex recognizes and binds DNA at specific sites, the E2 dimer is removed from DNA. E2 also regulates viral transcription through binding to the E2RE response element (5'-ACCNNNNNNGGT-3') present in multiple copies in the regulatory regions of the viral genome. Activates or represses transcription depending on E2RE's position with regards to proximal promoter elements including the TATA-box. Repression occurs by sterically hindering the assembly of the transcription initiation complex.</text>
</comment>
<comment type="subunit">
    <text evidence="1">Binds DNA as homodimer. Interacts with protein E1; this interaction greatly increases E1 DNA-binding activity. Interacts with protein L1; this interaction enhances E2-dependent replication and transcription activation. Interacts with protein L2; this interaction inhibits E2 transcriptional activity but not DNA replication function E2. Interacts with protein E7; this interaction inhibits E7 oncogenic activity. Interacts with host TAF1; this interaction modulates E2-dependent transcriptional regulation. Interacts with host BRD4; this interaction mediates E2 transcriptional activation function. Additionally, the interaction with host BRD4 on mitotic chromosomes mediates tethering of the viral genome. Interacts with host TOPBP1; this interaction is required for optimal viral DNA replication.</text>
</comment>
<comment type="subcellular location">
    <subcellularLocation>
        <location evidence="1">Host nucleus</location>
    </subcellularLocation>
</comment>
<comment type="PTM">
    <text evidence="1">Phosphorylated.</text>
</comment>
<comment type="PTM">
    <text evidence="1">Sumoylation plays a regulatory role in E2 transcriptional activity.</text>
</comment>
<comment type="similarity">
    <text evidence="1">Belongs to the papillomaviridae E2 protein family.</text>
</comment>
<sequence>METLCHRLNVCQEKILDCYELDSDKLVDQINYWTLLRYEAAMFYAARERNLRTINHQVVPATTVSKQKACQAIEMHMALQSLNKSDYNMEPWTMRETCYELWCVAPKQCFKKGGITVTVIFDGNKDNAMDYTSWKFIYIYDNDKWVKTNGNVDYTGIYYTVNSKKEYYVQFKDEAKIYGAQQWEVYMYGTVITCPEYVSSTCSDALSTTTTVEQLSNTPTTNPLTTCVGAKEAQTQQRKRQRLTEPDSSTISPLSVDNTNNQIHCGSGSTNTGGHQSATQTAFIVHLKGDTNCLKCFRYRFTKHKGLYKNVSSTWHWTSNTKTGIVTIVFDSAHQRETFIKTIKVPPSVTLSLGIMTL</sequence>
<organism>
    <name type="scientific">Human papillomavirus 51</name>
    <dbReference type="NCBI Taxonomy" id="10595"/>
    <lineage>
        <taxon>Viruses</taxon>
        <taxon>Monodnaviria</taxon>
        <taxon>Shotokuvirae</taxon>
        <taxon>Cossaviricota</taxon>
        <taxon>Papovaviricetes</taxon>
        <taxon>Zurhausenvirales</taxon>
        <taxon>Papillomaviridae</taxon>
        <taxon>Firstpapillomavirinae</taxon>
        <taxon>Alphapapillomavirus</taxon>
        <taxon>Alphapapillomavirus 5</taxon>
    </lineage>
</organism>
<gene>
    <name evidence="1" type="primary">E2</name>
</gene>
<keyword id="KW-0010">Activator</keyword>
<keyword id="KW-0235">DNA replication</keyword>
<keyword id="KW-0238">DNA-binding</keyword>
<keyword id="KW-0244">Early protein</keyword>
<keyword id="KW-1048">Host nucleus</keyword>
<keyword id="KW-1017">Isopeptide bond</keyword>
<keyword id="KW-0597">Phosphoprotein</keyword>
<keyword id="KW-0678">Repressor</keyword>
<keyword id="KW-0804">Transcription</keyword>
<keyword id="KW-0805">Transcription regulation</keyword>
<keyword id="KW-0832">Ubl conjugation</keyword>
<name>VE2_HPV51</name>
<dbReference type="EMBL" id="M62877">
    <property type="status" value="NOT_ANNOTATED_CDS"/>
    <property type="molecule type" value="Genomic_DNA"/>
</dbReference>
<dbReference type="PIR" id="B40415">
    <property type="entry name" value="W2WL51"/>
</dbReference>
<dbReference type="SMR" id="P26547"/>
<dbReference type="Proteomes" id="UP000009125">
    <property type="component" value="Segment"/>
</dbReference>
<dbReference type="GO" id="GO:0042025">
    <property type="term" value="C:host cell nucleus"/>
    <property type="evidence" value="ECO:0007669"/>
    <property type="project" value="UniProtKB-SubCell"/>
</dbReference>
<dbReference type="GO" id="GO:0003677">
    <property type="term" value="F:DNA binding"/>
    <property type="evidence" value="ECO:0007669"/>
    <property type="project" value="UniProtKB-UniRule"/>
</dbReference>
<dbReference type="GO" id="GO:0003700">
    <property type="term" value="F:DNA-binding transcription factor activity"/>
    <property type="evidence" value="ECO:0007669"/>
    <property type="project" value="UniProtKB-UniRule"/>
</dbReference>
<dbReference type="GO" id="GO:0000166">
    <property type="term" value="F:nucleotide binding"/>
    <property type="evidence" value="ECO:0007669"/>
    <property type="project" value="UniProtKB-UniRule"/>
</dbReference>
<dbReference type="GO" id="GO:0006260">
    <property type="term" value="P:DNA replication"/>
    <property type="evidence" value="ECO:0007669"/>
    <property type="project" value="UniProtKB-KW"/>
</dbReference>
<dbReference type="GO" id="GO:0006351">
    <property type="term" value="P:DNA-templated transcription"/>
    <property type="evidence" value="ECO:0007669"/>
    <property type="project" value="UniProtKB-UniRule"/>
</dbReference>
<dbReference type="GO" id="GO:0006275">
    <property type="term" value="P:regulation of DNA replication"/>
    <property type="evidence" value="ECO:0007669"/>
    <property type="project" value="UniProtKB-UniRule"/>
</dbReference>
<dbReference type="GO" id="GO:0039693">
    <property type="term" value="P:viral DNA genome replication"/>
    <property type="evidence" value="ECO:0007669"/>
    <property type="project" value="UniProtKB-UniRule"/>
</dbReference>
<dbReference type="Gene3D" id="3.30.70.330">
    <property type="match status" value="1"/>
</dbReference>
<dbReference type="Gene3D" id="1.10.287.30">
    <property type="entry name" value="E2 (early) protein, N terminal domain, subdomain 1"/>
    <property type="match status" value="1"/>
</dbReference>
<dbReference type="Gene3D" id="2.170.200.10">
    <property type="entry name" value="Papillomavirus E2 early protein domain"/>
    <property type="match status" value="1"/>
</dbReference>
<dbReference type="HAMAP" id="MF_04001">
    <property type="entry name" value="PPV_E2"/>
    <property type="match status" value="1"/>
</dbReference>
<dbReference type="InterPro" id="IPR035975">
    <property type="entry name" value="E2/EBNA1_C_sf"/>
</dbReference>
<dbReference type="InterPro" id="IPR012677">
    <property type="entry name" value="Nucleotide-bd_a/b_plait_sf"/>
</dbReference>
<dbReference type="InterPro" id="IPR000427">
    <property type="entry name" value="Papillomavirus_E2_C"/>
</dbReference>
<dbReference type="InterPro" id="IPR001866">
    <property type="entry name" value="PPV_E2_N"/>
</dbReference>
<dbReference type="InterPro" id="IPR033668">
    <property type="entry name" value="Reg_prot_E2"/>
</dbReference>
<dbReference type="InterPro" id="IPR036050">
    <property type="entry name" value="Regulatory_protein_E2_N"/>
</dbReference>
<dbReference type="InterPro" id="IPR042503">
    <property type="entry name" value="Regulatory_protein_E2_N_1"/>
</dbReference>
<dbReference type="InterPro" id="IPR042504">
    <property type="entry name" value="Regulatory_protein_E2_N_2"/>
</dbReference>
<dbReference type="Pfam" id="PF00511">
    <property type="entry name" value="PPV_E2_C"/>
    <property type="match status" value="1"/>
</dbReference>
<dbReference type="Pfam" id="PF00508">
    <property type="entry name" value="PPV_E2_N"/>
    <property type="match status" value="1"/>
</dbReference>
<dbReference type="SUPFAM" id="SSF51332">
    <property type="entry name" value="E2 regulatory, transactivation domain"/>
    <property type="match status" value="1"/>
</dbReference>
<dbReference type="SUPFAM" id="SSF54957">
    <property type="entry name" value="Viral DNA-binding domain"/>
    <property type="match status" value="1"/>
</dbReference>
<organismHost>
    <name type="scientific">Homo sapiens</name>
    <name type="common">Human</name>
    <dbReference type="NCBI Taxonomy" id="9606"/>
</organismHost>
<reference key="1">
    <citation type="journal article" date="1991" name="J. Virol.">
        <title>Biologic properties and nucleotide sequence analysis of human papillomavirus type 51.</title>
        <authorList>
            <person name="Lungu O."/>
            <person name="Crum C.P."/>
            <person name="Silverstein S.J."/>
        </authorList>
    </citation>
    <scope>NUCLEOTIDE SEQUENCE [GENOMIC DNA]</scope>
</reference>
<proteinExistence type="inferred from homology"/>
<protein>
    <recommendedName>
        <fullName evidence="1">Regulatory protein E2</fullName>
    </recommendedName>
</protein>